<keyword id="KW-0472">Membrane</keyword>
<keyword id="KW-0496">Mitochondrion</keyword>
<keyword id="KW-0999">Mitochondrion inner membrane</keyword>
<keyword id="KW-1185">Reference proteome</keyword>
<keyword id="KW-0809">Transit peptide</keyword>
<keyword id="KW-0812">Transmembrane</keyword>
<keyword id="KW-1133">Transmembrane helix</keyword>
<dbReference type="EMBL" id="DS231665">
    <property type="protein sequence ID" value="ESU12501.1"/>
    <property type="molecule type" value="Genomic_DNA"/>
</dbReference>
<dbReference type="EMBL" id="HG970334">
    <property type="protein sequence ID" value="CEF87445.1"/>
    <property type="molecule type" value="Genomic_DNA"/>
</dbReference>
<dbReference type="RefSeq" id="XP_011325077.1">
    <property type="nucleotide sequence ID" value="XM_011326775.1"/>
</dbReference>
<dbReference type="FunCoup" id="Q4I8P5">
    <property type="interactions" value="138"/>
</dbReference>
<dbReference type="STRING" id="229533.Q4I8P5"/>
<dbReference type="GeneID" id="23553546"/>
<dbReference type="KEGG" id="fgr:FGSG_06413"/>
<dbReference type="VEuPathDB" id="FungiDB:FGRAMPH1_01G20241"/>
<dbReference type="eggNOG" id="ENOG502S9GT">
    <property type="taxonomic scope" value="Eukaryota"/>
</dbReference>
<dbReference type="HOGENOM" id="CLU_131611_2_0_1"/>
<dbReference type="InParanoid" id="Q4I8P5"/>
<dbReference type="OrthoDB" id="23052at110618"/>
<dbReference type="Proteomes" id="UP000070720">
    <property type="component" value="Chromosome 3"/>
</dbReference>
<dbReference type="GO" id="GO:0005743">
    <property type="term" value="C:mitochondrial inner membrane"/>
    <property type="evidence" value="ECO:0007669"/>
    <property type="project" value="UniProtKB-SubCell"/>
</dbReference>
<dbReference type="GO" id="GO:0033617">
    <property type="term" value="P:mitochondrial cytochrome c oxidase assembly"/>
    <property type="evidence" value="ECO:0007669"/>
    <property type="project" value="TreeGrafter"/>
</dbReference>
<dbReference type="InterPro" id="IPR020164">
    <property type="entry name" value="Cyt_c_Oxase_assmbl_COX16"/>
</dbReference>
<dbReference type="PANTHER" id="PTHR17130:SF14">
    <property type="entry name" value="CYTOCHROME C OXIDASE ASSEMBLY PROTEIN COX16 HOMOLOG, MITOCHONDRIAL"/>
    <property type="match status" value="1"/>
</dbReference>
<dbReference type="PANTHER" id="PTHR17130">
    <property type="entry name" value="MITOCHONDRIAL OUTER MEMBRANE PROTEIN 25"/>
    <property type="match status" value="1"/>
</dbReference>
<dbReference type="Pfam" id="PF14138">
    <property type="entry name" value="COX16"/>
    <property type="match status" value="1"/>
</dbReference>
<feature type="transit peptide" description="Mitochondrion" evidence="2">
    <location>
        <begin position="1"/>
        <end position="11"/>
    </location>
</feature>
<feature type="chain" id="PRO_0000280648" description="Cytochrome c oxidase assembly protein COX16, mitochondrial">
    <location>
        <begin position="12"/>
        <end position="115"/>
    </location>
</feature>
<feature type="transmembrane region" description="Helical" evidence="2">
    <location>
        <begin position="30"/>
        <end position="50"/>
    </location>
</feature>
<comment type="function">
    <text evidence="1">Required for the assembly of the mitochondrial respiratory chain complex IV (CIV), also known as cytochrome c oxidase. May participate in merging the COX1 and COX2 assembly lines.</text>
</comment>
<comment type="subcellular location">
    <subcellularLocation>
        <location evidence="1">Mitochondrion inner membrane</location>
        <topology evidence="1">Single-pass membrane protein</topology>
    </subcellularLocation>
</comment>
<comment type="similarity">
    <text evidence="3">Belongs to the COX16 family.</text>
</comment>
<proteinExistence type="inferred from homology"/>
<sequence length="115" mass="13551">MPAFQSKKFRSAADMNSIGMRYRNLMNKHPFLMFGLPFLTVIVAGSFVLTPATAVRYERYDRKVRQMTKDEELNVRRSARKVDMKEEYYRLAGKDLDDWEQKRVKRLPGENDGLL</sequence>
<accession>Q4I8P5</accession>
<accession>A0A0E0SLY2</accession>
<accession>V6RDK6</accession>
<protein>
    <recommendedName>
        <fullName>Cytochrome c oxidase assembly protein COX16, mitochondrial</fullName>
    </recommendedName>
</protein>
<reference key="1">
    <citation type="journal article" date="2007" name="Science">
        <title>The Fusarium graminearum genome reveals a link between localized polymorphism and pathogen specialization.</title>
        <authorList>
            <person name="Cuomo C.A."/>
            <person name="Gueldener U."/>
            <person name="Xu J.-R."/>
            <person name="Trail F."/>
            <person name="Turgeon B.G."/>
            <person name="Di Pietro A."/>
            <person name="Walton J.D."/>
            <person name="Ma L.-J."/>
            <person name="Baker S.E."/>
            <person name="Rep M."/>
            <person name="Adam G."/>
            <person name="Antoniw J."/>
            <person name="Baldwin T."/>
            <person name="Calvo S.E."/>
            <person name="Chang Y.-L."/>
            <person name="DeCaprio D."/>
            <person name="Gale L.R."/>
            <person name="Gnerre S."/>
            <person name="Goswami R.S."/>
            <person name="Hammond-Kosack K."/>
            <person name="Harris L.J."/>
            <person name="Hilburn K."/>
            <person name="Kennell J.C."/>
            <person name="Kroken S."/>
            <person name="Magnuson J.K."/>
            <person name="Mannhaupt G."/>
            <person name="Mauceli E.W."/>
            <person name="Mewes H.-W."/>
            <person name="Mitterbauer R."/>
            <person name="Muehlbauer G."/>
            <person name="Muensterkoetter M."/>
            <person name="Nelson D."/>
            <person name="O'Donnell K."/>
            <person name="Ouellet T."/>
            <person name="Qi W."/>
            <person name="Quesneville H."/>
            <person name="Roncero M.I.G."/>
            <person name="Seong K.-Y."/>
            <person name="Tetko I.V."/>
            <person name="Urban M."/>
            <person name="Waalwijk C."/>
            <person name="Ward T.J."/>
            <person name="Yao J."/>
            <person name="Birren B.W."/>
            <person name="Kistler H.C."/>
        </authorList>
    </citation>
    <scope>NUCLEOTIDE SEQUENCE [LARGE SCALE GENOMIC DNA]</scope>
    <source>
        <strain>ATCC MYA-4620 / CBS 123657 / FGSC 9075 / NRRL 31084 / PH-1</strain>
    </source>
</reference>
<reference key="2">
    <citation type="journal article" date="2010" name="Nature">
        <title>Comparative genomics reveals mobile pathogenicity chromosomes in Fusarium.</title>
        <authorList>
            <person name="Ma L.-J."/>
            <person name="van der Does H.C."/>
            <person name="Borkovich K.A."/>
            <person name="Coleman J.J."/>
            <person name="Daboussi M.-J."/>
            <person name="Di Pietro A."/>
            <person name="Dufresne M."/>
            <person name="Freitag M."/>
            <person name="Grabherr M."/>
            <person name="Henrissat B."/>
            <person name="Houterman P.M."/>
            <person name="Kang S."/>
            <person name="Shim W.-B."/>
            <person name="Woloshuk C."/>
            <person name="Xie X."/>
            <person name="Xu J.-R."/>
            <person name="Antoniw J."/>
            <person name="Baker S.E."/>
            <person name="Bluhm B.H."/>
            <person name="Breakspear A."/>
            <person name="Brown D.W."/>
            <person name="Butchko R.A.E."/>
            <person name="Chapman S."/>
            <person name="Coulson R."/>
            <person name="Coutinho P.M."/>
            <person name="Danchin E.G.J."/>
            <person name="Diener A."/>
            <person name="Gale L.R."/>
            <person name="Gardiner D.M."/>
            <person name="Goff S."/>
            <person name="Hammond-Kosack K.E."/>
            <person name="Hilburn K."/>
            <person name="Hua-Van A."/>
            <person name="Jonkers W."/>
            <person name="Kazan K."/>
            <person name="Kodira C.D."/>
            <person name="Koehrsen M."/>
            <person name="Kumar L."/>
            <person name="Lee Y.-H."/>
            <person name="Li L."/>
            <person name="Manners J.M."/>
            <person name="Miranda-Saavedra D."/>
            <person name="Mukherjee M."/>
            <person name="Park G."/>
            <person name="Park J."/>
            <person name="Park S.-Y."/>
            <person name="Proctor R.H."/>
            <person name="Regev A."/>
            <person name="Ruiz-Roldan M.C."/>
            <person name="Sain D."/>
            <person name="Sakthikumar S."/>
            <person name="Sykes S."/>
            <person name="Schwartz D.C."/>
            <person name="Turgeon B.G."/>
            <person name="Wapinski I."/>
            <person name="Yoder O."/>
            <person name="Young S."/>
            <person name="Zeng Q."/>
            <person name="Zhou S."/>
            <person name="Galagan J."/>
            <person name="Cuomo C.A."/>
            <person name="Kistler H.C."/>
            <person name="Rep M."/>
        </authorList>
    </citation>
    <scope>GENOME REANNOTATION</scope>
    <source>
        <strain>ATCC MYA-4620 / CBS 123657 / FGSC 9075 / NRRL 31084 / PH-1</strain>
    </source>
</reference>
<reference key="3">
    <citation type="journal article" date="2015" name="BMC Genomics">
        <title>The completed genome sequence of the pathogenic ascomycete fungus Fusarium graminearum.</title>
        <authorList>
            <person name="King R."/>
            <person name="Urban M."/>
            <person name="Hammond-Kosack M.C.U."/>
            <person name="Hassani-Pak K."/>
            <person name="Hammond-Kosack K.E."/>
        </authorList>
    </citation>
    <scope>NUCLEOTIDE SEQUENCE [LARGE SCALE GENOMIC DNA]</scope>
    <source>
        <strain>ATCC MYA-4620 / CBS 123657 / FGSC 9075 / NRRL 31084 / PH-1</strain>
    </source>
</reference>
<name>COX16_GIBZE</name>
<organism>
    <name type="scientific">Gibberella zeae (strain ATCC MYA-4620 / CBS 123657 / FGSC 9075 / NRRL 31084 / PH-1)</name>
    <name type="common">Wheat head blight fungus</name>
    <name type="synonym">Fusarium graminearum</name>
    <dbReference type="NCBI Taxonomy" id="229533"/>
    <lineage>
        <taxon>Eukaryota</taxon>
        <taxon>Fungi</taxon>
        <taxon>Dikarya</taxon>
        <taxon>Ascomycota</taxon>
        <taxon>Pezizomycotina</taxon>
        <taxon>Sordariomycetes</taxon>
        <taxon>Hypocreomycetidae</taxon>
        <taxon>Hypocreales</taxon>
        <taxon>Nectriaceae</taxon>
        <taxon>Fusarium</taxon>
    </lineage>
</organism>
<evidence type="ECO:0000250" key="1">
    <source>
        <dbReference type="UniProtKB" id="P47081"/>
    </source>
</evidence>
<evidence type="ECO:0000255" key="2"/>
<evidence type="ECO:0000305" key="3"/>
<gene>
    <name type="primary">COX16</name>
    <name type="ORF">FGRRES_06413</name>
    <name type="ORF">FGSG_06413</name>
</gene>